<dbReference type="EMBL" id="CU928158">
    <property type="protein sequence ID" value="CAQ90610.1"/>
    <property type="molecule type" value="Genomic_DNA"/>
</dbReference>
<dbReference type="RefSeq" id="WP_000449444.1">
    <property type="nucleotide sequence ID" value="NC_011740.1"/>
</dbReference>
<dbReference type="SMR" id="B7LR07"/>
<dbReference type="KEGG" id="efe:EFER_3117"/>
<dbReference type="HOGENOM" id="CLU_105087_3_0_6"/>
<dbReference type="OrthoDB" id="8447155at2"/>
<dbReference type="Proteomes" id="UP000000745">
    <property type="component" value="Chromosome"/>
</dbReference>
<dbReference type="FunFam" id="2.30.110.10:FF:000003">
    <property type="entry name" value="UPF0306 protein YhbP"/>
    <property type="match status" value="1"/>
</dbReference>
<dbReference type="Gene3D" id="2.30.110.10">
    <property type="entry name" value="Electron Transport, Fmn-binding Protein, Chain A"/>
    <property type="match status" value="1"/>
</dbReference>
<dbReference type="HAMAP" id="MF_00764">
    <property type="entry name" value="UPF0306"/>
    <property type="match status" value="1"/>
</dbReference>
<dbReference type="InterPro" id="IPR012349">
    <property type="entry name" value="Split_barrel_FMN-bd"/>
</dbReference>
<dbReference type="InterPro" id="IPR011194">
    <property type="entry name" value="UPF0306"/>
</dbReference>
<dbReference type="NCBIfam" id="NF002900">
    <property type="entry name" value="PRK03467.1"/>
    <property type="match status" value="1"/>
</dbReference>
<dbReference type="PIRSF" id="PIRSF009554">
    <property type="entry name" value="UCP009554"/>
    <property type="match status" value="1"/>
</dbReference>
<dbReference type="SUPFAM" id="SSF50475">
    <property type="entry name" value="FMN-binding split barrel"/>
    <property type="match status" value="1"/>
</dbReference>
<sequence length="147" mass="16663">METLTAISRWLAKQHVVTLCVQQEGELWCANAFYLFDAQKVAFYILTEEKTRHAQMSGPQAAVAGTVNGQPKTVALIRGVQFKGEIRRLEGEESDLARKAYNRRFPVARMLSAPVWEIRLDEIKFTDNTLGFGKKMIWLRSSGTEQA</sequence>
<protein>
    <recommendedName>
        <fullName evidence="1">UPF0306 protein YhbP</fullName>
    </recommendedName>
</protein>
<gene>
    <name evidence="1" type="primary">yhbP</name>
    <name type="ordered locus">EFER_3117</name>
</gene>
<proteinExistence type="inferred from homology"/>
<feature type="chain" id="PRO_1000198359" description="UPF0306 protein YhbP">
    <location>
        <begin position="1"/>
        <end position="147"/>
    </location>
</feature>
<name>YHBP_ESCF3</name>
<evidence type="ECO:0000255" key="1">
    <source>
        <dbReference type="HAMAP-Rule" id="MF_00764"/>
    </source>
</evidence>
<reference key="1">
    <citation type="journal article" date="2009" name="PLoS Genet.">
        <title>Organised genome dynamics in the Escherichia coli species results in highly diverse adaptive paths.</title>
        <authorList>
            <person name="Touchon M."/>
            <person name="Hoede C."/>
            <person name="Tenaillon O."/>
            <person name="Barbe V."/>
            <person name="Baeriswyl S."/>
            <person name="Bidet P."/>
            <person name="Bingen E."/>
            <person name="Bonacorsi S."/>
            <person name="Bouchier C."/>
            <person name="Bouvet O."/>
            <person name="Calteau A."/>
            <person name="Chiapello H."/>
            <person name="Clermont O."/>
            <person name="Cruveiller S."/>
            <person name="Danchin A."/>
            <person name="Diard M."/>
            <person name="Dossat C."/>
            <person name="Karoui M.E."/>
            <person name="Frapy E."/>
            <person name="Garry L."/>
            <person name="Ghigo J.M."/>
            <person name="Gilles A.M."/>
            <person name="Johnson J."/>
            <person name="Le Bouguenec C."/>
            <person name="Lescat M."/>
            <person name="Mangenot S."/>
            <person name="Martinez-Jehanne V."/>
            <person name="Matic I."/>
            <person name="Nassif X."/>
            <person name="Oztas S."/>
            <person name="Petit M.A."/>
            <person name="Pichon C."/>
            <person name="Rouy Z."/>
            <person name="Ruf C.S."/>
            <person name="Schneider D."/>
            <person name="Tourret J."/>
            <person name="Vacherie B."/>
            <person name="Vallenet D."/>
            <person name="Medigue C."/>
            <person name="Rocha E.P.C."/>
            <person name="Denamur E."/>
        </authorList>
    </citation>
    <scope>NUCLEOTIDE SEQUENCE [LARGE SCALE GENOMIC DNA]</scope>
    <source>
        <strain>ATCC 35469 / DSM 13698 / BCRC 15582 / CCUG 18766 / IAM 14443 / JCM 21226 / LMG 7866 / NBRC 102419 / NCTC 12128 / CDC 0568-73</strain>
    </source>
</reference>
<accession>B7LR07</accession>
<comment type="similarity">
    <text evidence="1">Belongs to the UPF0306 family.</text>
</comment>
<organism>
    <name type="scientific">Escherichia fergusonii (strain ATCC 35469 / DSM 13698 / CCUG 18766 / IAM 14443 / JCM 21226 / LMG 7866 / NBRC 102419 / NCTC 12128 / CDC 0568-73)</name>
    <dbReference type="NCBI Taxonomy" id="585054"/>
    <lineage>
        <taxon>Bacteria</taxon>
        <taxon>Pseudomonadati</taxon>
        <taxon>Pseudomonadota</taxon>
        <taxon>Gammaproteobacteria</taxon>
        <taxon>Enterobacterales</taxon>
        <taxon>Enterobacteriaceae</taxon>
        <taxon>Escherichia</taxon>
    </lineage>
</organism>